<protein>
    <recommendedName>
        <fullName>Putative defensin-like protein 190</fullName>
    </recommendedName>
</protein>
<reference key="1">
    <citation type="journal article" date="1999" name="Nature">
        <title>Sequence and analysis of chromosome 2 of the plant Arabidopsis thaliana.</title>
        <authorList>
            <person name="Lin X."/>
            <person name="Kaul S."/>
            <person name="Rounsley S.D."/>
            <person name="Shea T.P."/>
            <person name="Benito M.-I."/>
            <person name="Town C.D."/>
            <person name="Fujii C.Y."/>
            <person name="Mason T.M."/>
            <person name="Bowman C.L."/>
            <person name="Barnstead M.E."/>
            <person name="Feldblyum T.V."/>
            <person name="Buell C.R."/>
            <person name="Ketchum K.A."/>
            <person name="Lee J.J."/>
            <person name="Ronning C.M."/>
            <person name="Koo H.L."/>
            <person name="Moffat K.S."/>
            <person name="Cronin L.A."/>
            <person name="Shen M."/>
            <person name="Pai G."/>
            <person name="Van Aken S."/>
            <person name="Umayam L."/>
            <person name="Tallon L.J."/>
            <person name="Gill J.E."/>
            <person name="Adams M.D."/>
            <person name="Carrera A.J."/>
            <person name="Creasy T.H."/>
            <person name="Goodman H.M."/>
            <person name="Somerville C.R."/>
            <person name="Copenhaver G.P."/>
            <person name="Preuss D."/>
            <person name="Nierman W.C."/>
            <person name="White O."/>
            <person name="Eisen J.A."/>
            <person name="Salzberg S.L."/>
            <person name="Fraser C.M."/>
            <person name="Venter J.C."/>
        </authorList>
    </citation>
    <scope>NUCLEOTIDE SEQUENCE [LARGE SCALE GENOMIC DNA]</scope>
    <source>
        <strain>cv. Columbia</strain>
    </source>
</reference>
<reference key="2">
    <citation type="journal article" date="2017" name="Plant J.">
        <title>Araport11: a complete reannotation of the Arabidopsis thaliana reference genome.</title>
        <authorList>
            <person name="Cheng C.Y."/>
            <person name="Krishnakumar V."/>
            <person name="Chan A.P."/>
            <person name="Thibaud-Nissen F."/>
            <person name="Schobel S."/>
            <person name="Town C.D."/>
        </authorList>
    </citation>
    <scope>GENOME REANNOTATION</scope>
    <source>
        <strain>cv. Columbia</strain>
    </source>
</reference>
<reference key="3">
    <citation type="journal article" date="2005" name="Plant Physiol.">
        <title>Genome organization of more than 300 defensin-like genes in Arabidopsis.</title>
        <authorList>
            <person name="Silverstein K.A.T."/>
            <person name="Graham M.A."/>
            <person name="Paape T.D."/>
            <person name="VandenBosch K.A."/>
        </authorList>
    </citation>
    <scope>GENE FAMILY</scope>
</reference>
<name>DF190_ARATH</name>
<feature type="signal peptide" evidence="2">
    <location>
        <begin position="1"/>
        <end position="30"/>
    </location>
</feature>
<feature type="chain" id="PRO_0000379688" description="Putative defensin-like protein 190">
    <location>
        <begin position="31"/>
        <end position="93"/>
    </location>
</feature>
<feature type="disulfide bond" evidence="1">
    <location>
        <begin position="39"/>
        <end position="89"/>
    </location>
</feature>
<feature type="disulfide bond" evidence="1">
    <location>
        <begin position="55"/>
        <end position="75"/>
    </location>
</feature>
<feature type="disulfide bond" evidence="1">
    <location>
        <begin position="60"/>
        <end position="84"/>
    </location>
</feature>
<feature type="disulfide bond" evidence="1">
    <location>
        <begin position="64"/>
        <end position="86"/>
    </location>
</feature>
<gene>
    <name type="ordered locus">At2g22807</name>
    <name type="ORF">T20K9</name>
    <name type="ORF">T30L20</name>
</gene>
<keyword id="KW-0929">Antimicrobial</keyword>
<keyword id="KW-1015">Disulfide bond</keyword>
<keyword id="KW-0295">Fungicide</keyword>
<keyword id="KW-0611">Plant defense</keyword>
<keyword id="KW-1185">Reference proteome</keyword>
<keyword id="KW-0964">Secreted</keyword>
<keyword id="KW-0732">Signal</keyword>
<sequence length="93" mass="10341">MKMAKAAATNDFGFITCLVIFLVLAGISNGMRMTQKVSCIEGRTLWARPPKFFYCSSTLCEDNCINTGAYRGGTCDMEDEVAICRCHRCKKII</sequence>
<dbReference type="EMBL" id="AC004786">
    <property type="status" value="NOT_ANNOTATED_CDS"/>
    <property type="molecule type" value="Genomic_DNA"/>
</dbReference>
<dbReference type="EMBL" id="AC005617">
    <property type="status" value="NOT_ANNOTATED_CDS"/>
    <property type="molecule type" value="Genomic_DNA"/>
</dbReference>
<dbReference type="EMBL" id="CP002685">
    <property type="protein sequence ID" value="AEC07359.1"/>
    <property type="molecule type" value="Genomic_DNA"/>
</dbReference>
<dbReference type="RefSeq" id="NP_001031399.1">
    <property type="nucleotide sequence ID" value="NM_001036322.2"/>
</dbReference>
<dbReference type="SMR" id="Q2V467"/>
<dbReference type="PaxDb" id="3702-AT2G22807.1"/>
<dbReference type="ProteomicsDB" id="224275"/>
<dbReference type="EnsemblPlants" id="AT2G22807.1">
    <property type="protein sequence ID" value="AT2G22807.1"/>
    <property type="gene ID" value="AT2G22807"/>
</dbReference>
<dbReference type="GeneID" id="3767872"/>
<dbReference type="Gramene" id="AT2G22807.1">
    <property type="protein sequence ID" value="AT2G22807.1"/>
    <property type="gene ID" value="AT2G22807"/>
</dbReference>
<dbReference type="KEGG" id="ath:AT2G22807"/>
<dbReference type="Araport" id="AT2G22807"/>
<dbReference type="TAIR" id="AT2G22807"/>
<dbReference type="HOGENOM" id="CLU_191725_0_0_1"/>
<dbReference type="InParanoid" id="Q2V467"/>
<dbReference type="OMA" id="DFGFITC"/>
<dbReference type="OrthoDB" id="10278968at2759"/>
<dbReference type="PhylomeDB" id="Q2V467"/>
<dbReference type="PRO" id="PR:Q2V467"/>
<dbReference type="Proteomes" id="UP000006548">
    <property type="component" value="Chromosome 2"/>
</dbReference>
<dbReference type="ExpressionAtlas" id="Q2V467">
    <property type="expression patterns" value="baseline"/>
</dbReference>
<dbReference type="GO" id="GO:0005576">
    <property type="term" value="C:extracellular region"/>
    <property type="evidence" value="ECO:0007669"/>
    <property type="project" value="UniProtKB-SubCell"/>
</dbReference>
<dbReference type="GO" id="GO:0050832">
    <property type="term" value="P:defense response to fungus"/>
    <property type="evidence" value="ECO:0007669"/>
    <property type="project" value="UniProtKB-KW"/>
</dbReference>
<dbReference type="GO" id="GO:0031640">
    <property type="term" value="P:killing of cells of another organism"/>
    <property type="evidence" value="ECO:0007669"/>
    <property type="project" value="UniProtKB-KW"/>
</dbReference>
<evidence type="ECO:0000250" key="1"/>
<evidence type="ECO:0000255" key="2"/>
<evidence type="ECO:0000305" key="3"/>
<comment type="subcellular location">
    <subcellularLocation>
        <location evidence="1">Secreted</location>
    </subcellularLocation>
</comment>
<comment type="similarity">
    <text evidence="3">Belongs to the DEFL family.</text>
</comment>
<accession>Q2V467</accession>
<organism>
    <name type="scientific">Arabidopsis thaliana</name>
    <name type="common">Mouse-ear cress</name>
    <dbReference type="NCBI Taxonomy" id="3702"/>
    <lineage>
        <taxon>Eukaryota</taxon>
        <taxon>Viridiplantae</taxon>
        <taxon>Streptophyta</taxon>
        <taxon>Embryophyta</taxon>
        <taxon>Tracheophyta</taxon>
        <taxon>Spermatophyta</taxon>
        <taxon>Magnoliopsida</taxon>
        <taxon>eudicotyledons</taxon>
        <taxon>Gunneridae</taxon>
        <taxon>Pentapetalae</taxon>
        <taxon>rosids</taxon>
        <taxon>malvids</taxon>
        <taxon>Brassicales</taxon>
        <taxon>Brassicaceae</taxon>
        <taxon>Camelineae</taxon>
        <taxon>Arabidopsis</taxon>
    </lineage>
</organism>
<proteinExistence type="inferred from homology"/>